<proteinExistence type="inferred from homology"/>
<keyword id="KW-0067">ATP-binding</keyword>
<keyword id="KW-0436">Ligase</keyword>
<keyword id="KW-0547">Nucleotide-binding</keyword>
<keyword id="KW-0648">Protein biosynthesis</keyword>
<keyword id="KW-1185">Reference proteome</keyword>
<sequence length="491" mass="52098">MTDLTSLTLAEARKGLADKTFTSLELTDAHLKAIEAARALNAFVMETPDQARAMARDADARIGKGEGGPLAGIPLGIKDLFATKDVRTTACSKILGNFVPTYESTVTAQLWRDGAVMLGKLNNDEFAMGSSNETSCFGPVGNPWRREGSNTTLVPGGSSGGSASAVAALLCMGATATDTGGSIRQPAAFTATVGIKPTYGRCSRWGIVAFASSLDQAGPIARTTRDAAILLRSMAGHDPKDTTSVDIPVPDYEAAIGKSVKGMKIGIPKEYRLDGMPAEIEKLWSEGAAWLKAAGAELVEVSLPHTKYALPAYYIVAPAEASSNLARYDGVRYGLRVPGKSIGELYENTRAEGFGAEVRRRVMIGTYVLSAGYYDAYYIRAQKVRTLIKRDFEDCFAKGVSAILTPATPSAAFGVGEKGGADPVEMYLNDIFTVTVNMAGLPGIAVPAGKDSQGLPLGLQLIGRPFDEETLFSLGEVIEQAAGRFTPVRWW</sequence>
<dbReference type="EC" id="6.3.5.7" evidence="1"/>
<dbReference type="EMBL" id="CU234118">
    <property type="protein sequence ID" value="CAL78227.1"/>
    <property type="molecule type" value="Genomic_DNA"/>
</dbReference>
<dbReference type="RefSeq" id="WP_011927337.1">
    <property type="nucleotide sequence ID" value="NC_009445.1"/>
</dbReference>
<dbReference type="SMR" id="A4YWF1"/>
<dbReference type="STRING" id="114615.BRADO4489"/>
<dbReference type="KEGG" id="bra:BRADO4489"/>
<dbReference type="eggNOG" id="COG0154">
    <property type="taxonomic scope" value="Bacteria"/>
</dbReference>
<dbReference type="HOGENOM" id="CLU_009600_0_3_5"/>
<dbReference type="OrthoDB" id="9811471at2"/>
<dbReference type="Proteomes" id="UP000001994">
    <property type="component" value="Chromosome"/>
</dbReference>
<dbReference type="GO" id="GO:0030956">
    <property type="term" value="C:glutamyl-tRNA(Gln) amidotransferase complex"/>
    <property type="evidence" value="ECO:0007669"/>
    <property type="project" value="InterPro"/>
</dbReference>
<dbReference type="GO" id="GO:0005524">
    <property type="term" value="F:ATP binding"/>
    <property type="evidence" value="ECO:0007669"/>
    <property type="project" value="UniProtKB-KW"/>
</dbReference>
<dbReference type="GO" id="GO:0050567">
    <property type="term" value="F:glutaminyl-tRNA synthase (glutamine-hydrolyzing) activity"/>
    <property type="evidence" value="ECO:0007669"/>
    <property type="project" value="UniProtKB-UniRule"/>
</dbReference>
<dbReference type="GO" id="GO:0006412">
    <property type="term" value="P:translation"/>
    <property type="evidence" value="ECO:0007669"/>
    <property type="project" value="UniProtKB-UniRule"/>
</dbReference>
<dbReference type="Gene3D" id="3.90.1300.10">
    <property type="entry name" value="Amidase signature (AS) domain"/>
    <property type="match status" value="1"/>
</dbReference>
<dbReference type="HAMAP" id="MF_00120">
    <property type="entry name" value="GatA"/>
    <property type="match status" value="1"/>
</dbReference>
<dbReference type="InterPro" id="IPR000120">
    <property type="entry name" value="Amidase"/>
</dbReference>
<dbReference type="InterPro" id="IPR020556">
    <property type="entry name" value="Amidase_CS"/>
</dbReference>
<dbReference type="InterPro" id="IPR023631">
    <property type="entry name" value="Amidase_dom"/>
</dbReference>
<dbReference type="InterPro" id="IPR036928">
    <property type="entry name" value="AS_sf"/>
</dbReference>
<dbReference type="InterPro" id="IPR004412">
    <property type="entry name" value="GatA"/>
</dbReference>
<dbReference type="NCBIfam" id="TIGR00132">
    <property type="entry name" value="gatA"/>
    <property type="match status" value="1"/>
</dbReference>
<dbReference type="PANTHER" id="PTHR11895:SF151">
    <property type="entry name" value="GLUTAMYL-TRNA(GLN) AMIDOTRANSFERASE SUBUNIT A"/>
    <property type="match status" value="1"/>
</dbReference>
<dbReference type="PANTHER" id="PTHR11895">
    <property type="entry name" value="TRANSAMIDASE"/>
    <property type="match status" value="1"/>
</dbReference>
<dbReference type="Pfam" id="PF01425">
    <property type="entry name" value="Amidase"/>
    <property type="match status" value="1"/>
</dbReference>
<dbReference type="SUPFAM" id="SSF75304">
    <property type="entry name" value="Amidase signature (AS) enzymes"/>
    <property type="match status" value="1"/>
</dbReference>
<dbReference type="PROSITE" id="PS00571">
    <property type="entry name" value="AMIDASES"/>
    <property type="match status" value="1"/>
</dbReference>
<accession>A4YWF1</accession>
<name>GATA_BRASO</name>
<organism>
    <name type="scientific">Bradyrhizobium sp. (strain ORS 278)</name>
    <dbReference type="NCBI Taxonomy" id="114615"/>
    <lineage>
        <taxon>Bacteria</taxon>
        <taxon>Pseudomonadati</taxon>
        <taxon>Pseudomonadota</taxon>
        <taxon>Alphaproteobacteria</taxon>
        <taxon>Hyphomicrobiales</taxon>
        <taxon>Nitrobacteraceae</taxon>
        <taxon>Bradyrhizobium</taxon>
    </lineage>
</organism>
<gene>
    <name evidence="1" type="primary">gatA</name>
    <name type="ordered locus">BRADO4489</name>
</gene>
<feature type="chain" id="PRO_1000015803" description="Glutamyl-tRNA(Gln) amidotransferase subunit A">
    <location>
        <begin position="1"/>
        <end position="491"/>
    </location>
</feature>
<feature type="active site" description="Charge relay system" evidence="1">
    <location>
        <position position="78"/>
    </location>
</feature>
<feature type="active site" description="Charge relay system" evidence="1">
    <location>
        <position position="158"/>
    </location>
</feature>
<feature type="active site" description="Acyl-ester intermediate" evidence="1">
    <location>
        <position position="182"/>
    </location>
</feature>
<evidence type="ECO:0000255" key="1">
    <source>
        <dbReference type="HAMAP-Rule" id="MF_00120"/>
    </source>
</evidence>
<reference key="1">
    <citation type="journal article" date="2007" name="Science">
        <title>Legumes symbioses: absence of nod genes in photosynthetic bradyrhizobia.</title>
        <authorList>
            <person name="Giraud E."/>
            <person name="Moulin L."/>
            <person name="Vallenet D."/>
            <person name="Barbe V."/>
            <person name="Cytryn E."/>
            <person name="Avarre J.-C."/>
            <person name="Jaubert M."/>
            <person name="Simon D."/>
            <person name="Cartieaux F."/>
            <person name="Prin Y."/>
            <person name="Bena G."/>
            <person name="Hannibal L."/>
            <person name="Fardoux J."/>
            <person name="Kojadinovic M."/>
            <person name="Vuillet L."/>
            <person name="Lajus A."/>
            <person name="Cruveiller S."/>
            <person name="Rouy Z."/>
            <person name="Mangenot S."/>
            <person name="Segurens B."/>
            <person name="Dossat C."/>
            <person name="Franck W.L."/>
            <person name="Chang W.-S."/>
            <person name="Saunders E."/>
            <person name="Bruce D."/>
            <person name="Richardson P."/>
            <person name="Normand P."/>
            <person name="Dreyfus B."/>
            <person name="Pignol D."/>
            <person name="Stacey G."/>
            <person name="Emerich D."/>
            <person name="Vermeglio A."/>
            <person name="Medigue C."/>
            <person name="Sadowsky M."/>
        </authorList>
    </citation>
    <scope>NUCLEOTIDE SEQUENCE [LARGE SCALE GENOMIC DNA]</scope>
    <source>
        <strain>ORS 278</strain>
    </source>
</reference>
<comment type="function">
    <text evidence="1">Allows the formation of correctly charged Gln-tRNA(Gln) through the transamidation of misacylated Glu-tRNA(Gln) in organisms which lack glutaminyl-tRNA synthetase. The reaction takes place in the presence of glutamine and ATP through an activated gamma-phospho-Glu-tRNA(Gln).</text>
</comment>
<comment type="catalytic activity">
    <reaction evidence="1">
        <text>L-glutamyl-tRNA(Gln) + L-glutamine + ATP + H2O = L-glutaminyl-tRNA(Gln) + L-glutamate + ADP + phosphate + H(+)</text>
        <dbReference type="Rhea" id="RHEA:17521"/>
        <dbReference type="Rhea" id="RHEA-COMP:9681"/>
        <dbReference type="Rhea" id="RHEA-COMP:9684"/>
        <dbReference type="ChEBI" id="CHEBI:15377"/>
        <dbReference type="ChEBI" id="CHEBI:15378"/>
        <dbReference type="ChEBI" id="CHEBI:29985"/>
        <dbReference type="ChEBI" id="CHEBI:30616"/>
        <dbReference type="ChEBI" id="CHEBI:43474"/>
        <dbReference type="ChEBI" id="CHEBI:58359"/>
        <dbReference type="ChEBI" id="CHEBI:78520"/>
        <dbReference type="ChEBI" id="CHEBI:78521"/>
        <dbReference type="ChEBI" id="CHEBI:456216"/>
        <dbReference type="EC" id="6.3.5.7"/>
    </reaction>
</comment>
<comment type="subunit">
    <text evidence="1">Heterotrimer of A, B and C subunits.</text>
</comment>
<comment type="similarity">
    <text evidence="1">Belongs to the amidase family. GatA subfamily.</text>
</comment>
<protein>
    <recommendedName>
        <fullName evidence="1">Glutamyl-tRNA(Gln) amidotransferase subunit A</fullName>
        <shortName evidence="1">Glu-ADT subunit A</shortName>
        <ecNumber evidence="1">6.3.5.7</ecNumber>
    </recommendedName>
</protein>